<dbReference type="EMBL" id="BA000030">
    <property type="protein sequence ID" value="BAC72922.1"/>
    <property type="molecule type" value="Genomic_DNA"/>
</dbReference>
<dbReference type="SMR" id="Q82CX8"/>
<dbReference type="KEGG" id="sma:SAVERM_5210"/>
<dbReference type="eggNOG" id="COG4702">
    <property type="taxonomic scope" value="Bacteria"/>
</dbReference>
<dbReference type="HOGENOM" id="CLU_101036_2_1_11"/>
<dbReference type="Proteomes" id="UP000000428">
    <property type="component" value="Chromosome"/>
</dbReference>
<dbReference type="Gene3D" id="3.30.450.150">
    <property type="entry name" value="Haem-degrading domain"/>
    <property type="match status" value="1"/>
</dbReference>
<dbReference type="HAMAP" id="MF_00761">
    <property type="entry name" value="UPF0303"/>
    <property type="match status" value="1"/>
</dbReference>
<dbReference type="InterPro" id="IPR005624">
    <property type="entry name" value="PduO/GlcC-like"/>
</dbReference>
<dbReference type="InterPro" id="IPR038084">
    <property type="entry name" value="PduO/GlcC-like_sf"/>
</dbReference>
<dbReference type="InterPro" id="IPR010371">
    <property type="entry name" value="YBR137W-like"/>
</dbReference>
<dbReference type="NCBIfam" id="NF002696">
    <property type="entry name" value="PRK02487.1-5"/>
    <property type="match status" value="1"/>
</dbReference>
<dbReference type="PANTHER" id="PTHR28255">
    <property type="match status" value="1"/>
</dbReference>
<dbReference type="PANTHER" id="PTHR28255:SF1">
    <property type="entry name" value="UPF0303 PROTEIN YBR137W"/>
    <property type="match status" value="1"/>
</dbReference>
<dbReference type="Pfam" id="PF03928">
    <property type="entry name" value="HbpS-like"/>
    <property type="match status" value="1"/>
</dbReference>
<dbReference type="PIRSF" id="PIRSF008757">
    <property type="entry name" value="UCP008757"/>
    <property type="match status" value="1"/>
</dbReference>
<dbReference type="SUPFAM" id="SSF143744">
    <property type="entry name" value="GlcG-like"/>
    <property type="match status" value="1"/>
</dbReference>
<name>Y5210_STRAW</name>
<keyword id="KW-1185">Reference proteome</keyword>
<proteinExistence type="inferred from homology"/>
<comment type="similarity">
    <text evidence="1">Belongs to the UPF0303 family.</text>
</comment>
<gene>
    <name type="ordered locus">SAV_5210</name>
</gene>
<organism>
    <name type="scientific">Streptomyces avermitilis (strain ATCC 31267 / DSM 46492 / JCM 5070 / NBRC 14893 / NCIMB 12804 / NRRL 8165 / MA-4680)</name>
    <dbReference type="NCBI Taxonomy" id="227882"/>
    <lineage>
        <taxon>Bacteria</taxon>
        <taxon>Bacillati</taxon>
        <taxon>Actinomycetota</taxon>
        <taxon>Actinomycetes</taxon>
        <taxon>Kitasatosporales</taxon>
        <taxon>Streptomycetaceae</taxon>
        <taxon>Streptomyces</taxon>
    </lineage>
</organism>
<accession>Q82CX8</accession>
<evidence type="ECO:0000255" key="1">
    <source>
        <dbReference type="HAMAP-Rule" id="MF_00761"/>
    </source>
</evidence>
<reference key="1">
    <citation type="journal article" date="2001" name="Proc. Natl. Acad. Sci. U.S.A.">
        <title>Genome sequence of an industrial microorganism Streptomyces avermitilis: deducing the ability of producing secondary metabolites.</title>
        <authorList>
            <person name="Omura S."/>
            <person name="Ikeda H."/>
            <person name="Ishikawa J."/>
            <person name="Hanamoto A."/>
            <person name="Takahashi C."/>
            <person name="Shinose M."/>
            <person name="Takahashi Y."/>
            <person name="Horikawa H."/>
            <person name="Nakazawa H."/>
            <person name="Osonoe T."/>
            <person name="Kikuchi H."/>
            <person name="Shiba T."/>
            <person name="Sakaki Y."/>
            <person name="Hattori M."/>
        </authorList>
    </citation>
    <scope>NUCLEOTIDE SEQUENCE [LARGE SCALE GENOMIC DNA]</scope>
    <source>
        <strain>ATCC 31267 / DSM 46492 / JCM 5070 / NBRC 14893 / NCIMB 12804 / NRRL 8165 / MA-4680</strain>
    </source>
</reference>
<reference key="2">
    <citation type="journal article" date="2003" name="Nat. Biotechnol.">
        <title>Complete genome sequence and comparative analysis of the industrial microorganism Streptomyces avermitilis.</title>
        <authorList>
            <person name="Ikeda H."/>
            <person name="Ishikawa J."/>
            <person name="Hanamoto A."/>
            <person name="Shinose M."/>
            <person name="Kikuchi H."/>
            <person name="Shiba T."/>
            <person name="Sakaki Y."/>
            <person name="Hattori M."/>
            <person name="Omura S."/>
        </authorList>
    </citation>
    <scope>NUCLEOTIDE SEQUENCE [LARGE SCALE GENOMIC DNA]</scope>
    <source>
        <strain>ATCC 31267 / DSM 46492 / JCM 5070 / NBRC 14893 / NCIMB 12804 / NRRL 8165 / MA-4680</strain>
    </source>
</reference>
<protein>
    <recommendedName>
        <fullName evidence="1">UPF0303 protein SAV_5210</fullName>
    </recommendedName>
</protein>
<sequence>MTEAAKPPTIPELEAQERRLTLPHFTYDDAWAFGNLLVELARRRCAPVAVDIRRGGQQLFHAALPGSTPDNDAWIDRKRRVVERYGSSSYLVGCRFRAKGTTFEESSRLDPDKYAAHGGAFPITVEGAGVVGTVVVSGLPQVEDHALVVEALEQFMTRPWSSS</sequence>
<feature type="chain" id="PRO_0000208921" description="UPF0303 protein SAV_5210">
    <location>
        <begin position="1"/>
        <end position="163"/>
    </location>
</feature>